<keyword id="KW-0068">Autocatalytic cleavage</keyword>
<keyword id="KW-0227">DNA damage</keyword>
<keyword id="KW-0234">DNA repair</keyword>
<keyword id="KW-0235">DNA replication</keyword>
<keyword id="KW-0238">DNA-binding</keyword>
<keyword id="KW-0378">Hydrolase</keyword>
<keyword id="KW-1185">Reference proteome</keyword>
<keyword id="KW-0678">Repressor</keyword>
<keyword id="KW-0742">SOS response</keyword>
<keyword id="KW-0804">Transcription</keyword>
<keyword id="KW-0805">Transcription regulation</keyword>
<name>LEXA_KORVE</name>
<comment type="function">
    <text evidence="1">Represses a number of genes involved in the response to DNA damage (SOS response), including recA and lexA. In the presence of single-stranded DNA, RecA interacts with LexA causing an autocatalytic cleavage which disrupts the DNA-binding part of LexA, leading to derepression of the SOS regulon and eventually DNA repair.</text>
</comment>
<comment type="catalytic activity">
    <reaction evidence="1">
        <text>Hydrolysis of Ala-|-Gly bond in repressor LexA.</text>
        <dbReference type="EC" id="3.4.21.88"/>
    </reaction>
</comment>
<comment type="subunit">
    <text evidence="1">Homodimer.</text>
</comment>
<comment type="similarity">
    <text evidence="1">Belongs to the peptidase S24 family.</text>
</comment>
<protein>
    <recommendedName>
        <fullName evidence="1">LexA repressor</fullName>
        <ecNumber evidence="1">3.4.21.88</ecNumber>
    </recommendedName>
</protein>
<gene>
    <name evidence="1" type="primary">lexA</name>
    <name type="ordered locus">Acid345_0581</name>
</gene>
<reference key="1">
    <citation type="journal article" date="2009" name="Appl. Environ. Microbiol.">
        <title>Three genomes from the phylum Acidobacteria provide insight into the lifestyles of these microorganisms in soils.</title>
        <authorList>
            <person name="Ward N.L."/>
            <person name="Challacombe J.F."/>
            <person name="Janssen P.H."/>
            <person name="Henrissat B."/>
            <person name="Coutinho P.M."/>
            <person name="Wu M."/>
            <person name="Xie G."/>
            <person name="Haft D.H."/>
            <person name="Sait M."/>
            <person name="Badger J."/>
            <person name="Barabote R.D."/>
            <person name="Bradley B."/>
            <person name="Brettin T.S."/>
            <person name="Brinkac L.M."/>
            <person name="Bruce D."/>
            <person name="Creasy T."/>
            <person name="Daugherty S.C."/>
            <person name="Davidsen T.M."/>
            <person name="DeBoy R.T."/>
            <person name="Detter J.C."/>
            <person name="Dodson R.J."/>
            <person name="Durkin A.S."/>
            <person name="Ganapathy A."/>
            <person name="Gwinn-Giglio M."/>
            <person name="Han C.S."/>
            <person name="Khouri H."/>
            <person name="Kiss H."/>
            <person name="Kothari S.P."/>
            <person name="Madupu R."/>
            <person name="Nelson K.E."/>
            <person name="Nelson W.C."/>
            <person name="Paulsen I."/>
            <person name="Penn K."/>
            <person name="Ren Q."/>
            <person name="Rosovitz M.J."/>
            <person name="Selengut J.D."/>
            <person name="Shrivastava S."/>
            <person name="Sullivan S.A."/>
            <person name="Tapia R."/>
            <person name="Thompson L.S."/>
            <person name="Watkins K.L."/>
            <person name="Yang Q."/>
            <person name="Yu C."/>
            <person name="Zafar N."/>
            <person name="Zhou L."/>
            <person name="Kuske C.R."/>
        </authorList>
    </citation>
    <scope>NUCLEOTIDE SEQUENCE [LARGE SCALE GENOMIC DNA]</scope>
    <source>
        <strain>Ellin345</strain>
    </source>
</reference>
<accession>Q1IU64</accession>
<organism>
    <name type="scientific">Koribacter versatilis (strain Ellin345)</name>
    <dbReference type="NCBI Taxonomy" id="204669"/>
    <lineage>
        <taxon>Bacteria</taxon>
        <taxon>Pseudomonadati</taxon>
        <taxon>Acidobacteriota</taxon>
        <taxon>Terriglobia</taxon>
        <taxon>Terriglobales</taxon>
        <taxon>Candidatus Korobacteraceae</taxon>
        <taxon>Candidatus Korobacter</taxon>
    </lineage>
</organism>
<sequence length="210" mass="23047">MVALTRRQREMYDFLCSFTDSHGYSPSFEEIAEGMGLSSLATVHKHIGNLESKGLLKRDYNRARSIEVLRPKGQLKKSMAAAAAVATAGLPFLGRIAAGQPIEAIENPETISLGDFTGSKEVFVLQVSGESMQDEHIVDGDYVLVERINTARDGEIVVALVENSDTTLKRIYREGETVRLQPSNAKMQPIRVPAGSVQVQGRVIGVLRKY</sequence>
<dbReference type="EC" id="3.4.21.88" evidence="1"/>
<dbReference type="EMBL" id="CP000360">
    <property type="protein sequence ID" value="ABF39586.1"/>
    <property type="molecule type" value="Genomic_DNA"/>
</dbReference>
<dbReference type="RefSeq" id="WP_011521388.1">
    <property type="nucleotide sequence ID" value="NC_008009.1"/>
</dbReference>
<dbReference type="SMR" id="Q1IU64"/>
<dbReference type="STRING" id="204669.Acid345_0581"/>
<dbReference type="MEROPS" id="S24.001"/>
<dbReference type="EnsemblBacteria" id="ABF39586">
    <property type="protein sequence ID" value="ABF39586"/>
    <property type="gene ID" value="Acid345_0581"/>
</dbReference>
<dbReference type="KEGG" id="aba:Acid345_0581"/>
<dbReference type="eggNOG" id="COG1974">
    <property type="taxonomic scope" value="Bacteria"/>
</dbReference>
<dbReference type="HOGENOM" id="CLU_066192_45_1_0"/>
<dbReference type="OrthoDB" id="9802364at2"/>
<dbReference type="Proteomes" id="UP000002432">
    <property type="component" value="Chromosome"/>
</dbReference>
<dbReference type="GO" id="GO:0003677">
    <property type="term" value="F:DNA binding"/>
    <property type="evidence" value="ECO:0007669"/>
    <property type="project" value="UniProtKB-UniRule"/>
</dbReference>
<dbReference type="GO" id="GO:0004252">
    <property type="term" value="F:serine-type endopeptidase activity"/>
    <property type="evidence" value="ECO:0007669"/>
    <property type="project" value="UniProtKB-UniRule"/>
</dbReference>
<dbReference type="GO" id="GO:0006281">
    <property type="term" value="P:DNA repair"/>
    <property type="evidence" value="ECO:0007669"/>
    <property type="project" value="UniProtKB-UniRule"/>
</dbReference>
<dbReference type="GO" id="GO:0006260">
    <property type="term" value="P:DNA replication"/>
    <property type="evidence" value="ECO:0007669"/>
    <property type="project" value="UniProtKB-UniRule"/>
</dbReference>
<dbReference type="GO" id="GO:0045892">
    <property type="term" value="P:negative regulation of DNA-templated transcription"/>
    <property type="evidence" value="ECO:0007669"/>
    <property type="project" value="UniProtKB-UniRule"/>
</dbReference>
<dbReference type="GO" id="GO:0006508">
    <property type="term" value="P:proteolysis"/>
    <property type="evidence" value="ECO:0007669"/>
    <property type="project" value="InterPro"/>
</dbReference>
<dbReference type="GO" id="GO:0009432">
    <property type="term" value="P:SOS response"/>
    <property type="evidence" value="ECO:0007669"/>
    <property type="project" value="UniProtKB-UniRule"/>
</dbReference>
<dbReference type="CDD" id="cd06529">
    <property type="entry name" value="S24_LexA-like"/>
    <property type="match status" value="1"/>
</dbReference>
<dbReference type="FunFam" id="2.10.109.10:FF:000001">
    <property type="entry name" value="LexA repressor"/>
    <property type="match status" value="1"/>
</dbReference>
<dbReference type="Gene3D" id="2.10.109.10">
    <property type="entry name" value="Umud Fragment, subunit A"/>
    <property type="match status" value="1"/>
</dbReference>
<dbReference type="Gene3D" id="1.10.10.10">
    <property type="entry name" value="Winged helix-like DNA-binding domain superfamily/Winged helix DNA-binding domain"/>
    <property type="match status" value="1"/>
</dbReference>
<dbReference type="HAMAP" id="MF_00015">
    <property type="entry name" value="LexA"/>
    <property type="match status" value="1"/>
</dbReference>
<dbReference type="InterPro" id="IPR006200">
    <property type="entry name" value="LexA"/>
</dbReference>
<dbReference type="InterPro" id="IPR039418">
    <property type="entry name" value="LexA-like"/>
</dbReference>
<dbReference type="InterPro" id="IPR036286">
    <property type="entry name" value="LexA/Signal_pep-like_sf"/>
</dbReference>
<dbReference type="InterPro" id="IPR006199">
    <property type="entry name" value="LexA_DNA-bd_dom"/>
</dbReference>
<dbReference type="InterPro" id="IPR050077">
    <property type="entry name" value="LexA_repressor"/>
</dbReference>
<dbReference type="InterPro" id="IPR006197">
    <property type="entry name" value="Peptidase_S24_LexA"/>
</dbReference>
<dbReference type="InterPro" id="IPR015927">
    <property type="entry name" value="Peptidase_S24_S26A/B/C"/>
</dbReference>
<dbReference type="InterPro" id="IPR036388">
    <property type="entry name" value="WH-like_DNA-bd_sf"/>
</dbReference>
<dbReference type="InterPro" id="IPR036390">
    <property type="entry name" value="WH_DNA-bd_sf"/>
</dbReference>
<dbReference type="NCBIfam" id="TIGR00498">
    <property type="entry name" value="lexA"/>
    <property type="match status" value="1"/>
</dbReference>
<dbReference type="PANTHER" id="PTHR33516">
    <property type="entry name" value="LEXA REPRESSOR"/>
    <property type="match status" value="1"/>
</dbReference>
<dbReference type="PANTHER" id="PTHR33516:SF2">
    <property type="entry name" value="LEXA REPRESSOR-RELATED"/>
    <property type="match status" value="1"/>
</dbReference>
<dbReference type="Pfam" id="PF01726">
    <property type="entry name" value="LexA_DNA_bind"/>
    <property type="match status" value="1"/>
</dbReference>
<dbReference type="Pfam" id="PF00717">
    <property type="entry name" value="Peptidase_S24"/>
    <property type="match status" value="1"/>
</dbReference>
<dbReference type="PRINTS" id="PR00726">
    <property type="entry name" value="LEXASERPTASE"/>
</dbReference>
<dbReference type="SUPFAM" id="SSF51306">
    <property type="entry name" value="LexA/Signal peptidase"/>
    <property type="match status" value="1"/>
</dbReference>
<dbReference type="SUPFAM" id="SSF46785">
    <property type="entry name" value="Winged helix' DNA-binding domain"/>
    <property type="match status" value="1"/>
</dbReference>
<proteinExistence type="inferred from homology"/>
<evidence type="ECO:0000255" key="1">
    <source>
        <dbReference type="HAMAP-Rule" id="MF_00015"/>
    </source>
</evidence>
<feature type="chain" id="PRO_1000001250" description="LexA repressor">
    <location>
        <begin position="1"/>
        <end position="210"/>
    </location>
</feature>
<feature type="DNA-binding region" description="H-T-H motif" evidence="1">
    <location>
        <begin position="28"/>
        <end position="48"/>
    </location>
</feature>
<feature type="active site" description="For autocatalytic cleavage activity" evidence="1">
    <location>
        <position position="131"/>
    </location>
</feature>
<feature type="active site" description="For autocatalytic cleavage activity" evidence="1">
    <location>
        <position position="169"/>
    </location>
</feature>
<feature type="site" description="Cleavage; by autolysis" evidence="1">
    <location>
        <begin position="98"/>
        <end position="99"/>
    </location>
</feature>